<protein>
    <recommendedName>
        <fullName evidence="1">Replication protein E1</fullName>
        <ecNumber evidence="1">5.6.2.4</ecNumber>
    </recommendedName>
    <alternativeName>
        <fullName evidence="1">ATP-dependent helicase E1</fullName>
    </alternativeName>
    <alternativeName>
        <fullName evidence="1">DNA 3'-5' helicase E1</fullName>
    </alternativeName>
</protein>
<accession>P50808</accession>
<proteinExistence type="inferred from homology"/>
<feature type="chain" id="PRO_0000133134" description="Replication protein E1">
    <location>
        <begin position="1"/>
        <end position="604"/>
    </location>
</feature>
<feature type="domain" description="SF3 helicase" evidence="1">
    <location>
        <begin position="406"/>
        <end position="556"/>
    </location>
</feature>
<feature type="region of interest" description="DNA-binding region" evidence="1">
    <location>
        <begin position="144"/>
        <end position="307"/>
    </location>
</feature>
<feature type="region of interest" description="Disordered" evidence="2">
    <location>
        <begin position="578"/>
        <end position="604"/>
    </location>
</feature>
<feature type="short sequence motif" description="Nuclear localization signal" evidence="1">
    <location>
        <begin position="76"/>
        <end position="78"/>
    </location>
</feature>
<feature type="short sequence motif" description="Nuclear export signal" evidence="1">
    <location>
        <begin position="88"/>
        <end position="97"/>
    </location>
</feature>
<feature type="compositionally biased region" description="Polar residues" evidence="2">
    <location>
        <begin position="587"/>
        <end position="604"/>
    </location>
</feature>
<feature type="binding site" evidence="1">
    <location>
        <begin position="432"/>
        <end position="439"/>
    </location>
    <ligand>
        <name>ATP</name>
        <dbReference type="ChEBI" id="CHEBI:30616"/>
    </ligand>
</feature>
<feature type="modified residue" description="Phosphoserine; by host" evidence="1">
    <location>
        <position position="81"/>
    </location>
</feature>
<feature type="modified residue" description="Phosphoserine; by host" evidence="1">
    <location>
        <position position="89"/>
    </location>
</feature>
<feature type="cross-link" description="Glycyl lysine isopeptide (Lys-Gly) (interchain with G-Cter in SUMO)" evidence="1">
    <location>
        <position position="513"/>
    </location>
</feature>
<comment type="function">
    <text evidence="1">ATP-dependent DNA 3'-5' helicase required for initiation of viral DNA replication. It forms a complex with the viral E2 protein. The E1-E2 complex binds to the replication origin which contains binding sites for both proteins. During the initial step, a dimer of E1 interacts with a dimer of protein E2 leading to a complex that binds the viral origin of replication with high specificity. Then, a second dimer of E1 displaces the E2 dimer in an ATP-dependent manner to form the E1 tetramer. Following this, two E1 monomers are added to each half of the site, which results in the formation of two E1 trimers on the viral ori. Subsequently, two hexamers will be created. The double hexamer acts as a bi-directional helicase machinery and unwinds the viral DNA and then recruits the host DNA polymerase to start replication.</text>
</comment>
<comment type="catalytic activity">
    <reaction evidence="1">
        <text>Couples ATP hydrolysis with the unwinding of duplex DNA by translocating in the 3'-5' direction.</text>
        <dbReference type="EC" id="5.6.2.4"/>
    </reaction>
</comment>
<comment type="catalytic activity">
    <reaction evidence="1">
        <text>ATP + H2O = ADP + phosphate + H(+)</text>
        <dbReference type="Rhea" id="RHEA:13065"/>
        <dbReference type="ChEBI" id="CHEBI:15377"/>
        <dbReference type="ChEBI" id="CHEBI:15378"/>
        <dbReference type="ChEBI" id="CHEBI:30616"/>
        <dbReference type="ChEBI" id="CHEBI:43474"/>
        <dbReference type="ChEBI" id="CHEBI:456216"/>
        <dbReference type="EC" id="5.6.2.4"/>
    </reaction>
</comment>
<comment type="subunit">
    <text evidence="1">Can form hexamers. Interacts with E2 protein; this interaction increases E1 DNA binding specificity. Interacts with host DNA polymerase subunit POLA2. Interacts with host single stranded DNA-binding protein RPA1. Interacts with host TOP1; this interaction stimulates the enzymatic activity of TOP1.</text>
</comment>
<comment type="subcellular location">
    <subcellularLocation>
        <location evidence="1">Host nucleus</location>
    </subcellularLocation>
</comment>
<comment type="PTM">
    <text evidence="1">Phosphorylated.</text>
</comment>
<comment type="PTM">
    <text evidence="1">Sumoylated.</text>
</comment>
<comment type="similarity">
    <text evidence="1">Belongs to the papillomaviridae E1 protein family.</text>
</comment>
<organismHost>
    <name type="scientific">Homo sapiens</name>
    <name type="common">Human</name>
    <dbReference type="NCBI Taxonomy" id="9606"/>
</organismHost>
<gene>
    <name evidence="1" type="primary">E1</name>
</gene>
<reference key="1">
    <citation type="submission" date="1995-10" db="EMBL/GenBank/DDBJ databases">
        <authorList>
            <person name="Delius H."/>
        </authorList>
    </citation>
    <scope>NUCLEOTIDE SEQUENCE [GENOMIC DNA]</scope>
</reference>
<dbReference type="EC" id="5.6.2.4" evidence="1"/>
<dbReference type="EMBL" id="U31785">
    <property type="protein sequence ID" value="AAA79438.1"/>
    <property type="molecule type" value="Genomic_DNA"/>
</dbReference>
<dbReference type="SMR" id="P50808"/>
<dbReference type="Proteomes" id="UP000009167">
    <property type="component" value="Genome"/>
</dbReference>
<dbReference type="GO" id="GO:0042025">
    <property type="term" value="C:host cell nucleus"/>
    <property type="evidence" value="ECO:0007669"/>
    <property type="project" value="UniProtKB-SubCell"/>
</dbReference>
<dbReference type="GO" id="GO:0005524">
    <property type="term" value="F:ATP binding"/>
    <property type="evidence" value="ECO:0007669"/>
    <property type="project" value="UniProtKB-UniRule"/>
</dbReference>
<dbReference type="GO" id="GO:0016887">
    <property type="term" value="F:ATP hydrolysis activity"/>
    <property type="evidence" value="ECO:0007669"/>
    <property type="project" value="RHEA"/>
</dbReference>
<dbReference type="GO" id="GO:0003677">
    <property type="term" value="F:DNA binding"/>
    <property type="evidence" value="ECO:0007669"/>
    <property type="project" value="UniProtKB-UniRule"/>
</dbReference>
<dbReference type="GO" id="GO:0003678">
    <property type="term" value="F:DNA helicase activity"/>
    <property type="evidence" value="ECO:0007669"/>
    <property type="project" value="UniProtKB-UniRule"/>
</dbReference>
<dbReference type="GO" id="GO:0006260">
    <property type="term" value="P:DNA replication"/>
    <property type="evidence" value="ECO:0007669"/>
    <property type="project" value="UniProtKB-UniRule"/>
</dbReference>
<dbReference type="Gene3D" id="3.40.1310.10">
    <property type="match status" value="1"/>
</dbReference>
<dbReference type="Gene3D" id="3.40.50.300">
    <property type="entry name" value="P-loop containing nucleotide triphosphate hydrolases"/>
    <property type="match status" value="1"/>
</dbReference>
<dbReference type="Gene3D" id="1.10.10.510">
    <property type="entry name" value="Zinc finger, large T-antigen D1 domain"/>
    <property type="match status" value="1"/>
</dbReference>
<dbReference type="HAMAP" id="MF_04000">
    <property type="entry name" value="PPV_E1"/>
    <property type="match status" value="1"/>
</dbReference>
<dbReference type="InterPro" id="IPR014015">
    <property type="entry name" value="Helicase_SF3_DNA-vir"/>
</dbReference>
<dbReference type="InterPro" id="IPR027417">
    <property type="entry name" value="P-loop_NTPase"/>
</dbReference>
<dbReference type="InterPro" id="IPR001177">
    <property type="entry name" value="PPV_DNA_helicase_E1_C"/>
</dbReference>
<dbReference type="InterPro" id="IPR014000">
    <property type="entry name" value="PPV_DNA_helicase_E1_N"/>
</dbReference>
<dbReference type="InterPro" id="IPR046832">
    <property type="entry name" value="PPV_E1_DBD"/>
</dbReference>
<dbReference type="InterPro" id="IPR046935">
    <property type="entry name" value="PPV_E1_DBD_sf"/>
</dbReference>
<dbReference type="InterPro" id="IPR016393">
    <property type="entry name" value="Rep_E1_papillomaV"/>
</dbReference>
<dbReference type="InterPro" id="IPR037102">
    <property type="entry name" value="Znf_lg_T-Ag_D1_dom_sf"/>
</dbReference>
<dbReference type="Pfam" id="PF00519">
    <property type="entry name" value="PPV_E1_C"/>
    <property type="match status" value="1"/>
</dbReference>
<dbReference type="Pfam" id="PF20450">
    <property type="entry name" value="PPV_E1_DBD"/>
    <property type="match status" value="1"/>
</dbReference>
<dbReference type="Pfam" id="PF00524">
    <property type="entry name" value="PPV_E1_N"/>
    <property type="match status" value="1"/>
</dbReference>
<dbReference type="PIRSF" id="PIRSF003383">
    <property type="entry name" value="Rep_E1_papillomaV"/>
    <property type="match status" value="1"/>
</dbReference>
<dbReference type="SUPFAM" id="SSF55464">
    <property type="entry name" value="Origin of replication-binding domain, RBD-like"/>
    <property type="match status" value="1"/>
</dbReference>
<dbReference type="SUPFAM" id="SSF52540">
    <property type="entry name" value="P-loop containing nucleoside triphosphate hydrolases"/>
    <property type="match status" value="1"/>
</dbReference>
<dbReference type="PROSITE" id="PS51206">
    <property type="entry name" value="SF3_HELICASE_1"/>
    <property type="match status" value="1"/>
</dbReference>
<sequence length="604" mass="68973">MADPKGSTSKEGFGDWCILEADCSDIENDMEQLFERDTDSDISDLIDDCDLEQGNSLELFHQQECKQSEEQLQKLKRKCLSPKAVAQLSPRLQSISLSPQQKSKRRLFAEQDSGVELTLNNEAEDVTTEVEVPAIDSRPDDEGGSGDVDIHYLSLLRSSNKKATLMAKFKAAFGVGFNELTRQFKSHKTCCNHWVVSVYAVHDDLFESSKQLLQQHCDYLWVRGIDAMSLYLLCFKAGKNRGTVHKLMTSMLNVHEQQILSEPPKLRNTAAALFWYKGCMGSGVFSYGPYPDWIAQQTILGHNNAEASTFDFSQMVQWAFDNQLVDEGDIAYRYARLAPEDANAVAWLAHNSQAKFVRECAAMVRFYKKGQMRDMSMSEWIYTKIHEVEGEGHWSDIVKFLRYQEVNFIMFLAAFKDFLHSKPKKNCILIHGPPNSGKSSFAMSLIRVLKGRVLSFVNSKSQFWLQPLSECKIALIDDVTDPCWLYMDNYLRNGLDGHYVSLDCKYKAPMQTKFPPLLLTSNINVHEEANYRYLHSRIKGFAFPNPFPMKSDDTPQFELTDQSWKSFFERLWTQLELSDQEDEGENGESQRAFQCSAGSANEHL</sequence>
<name>VE1_HPV36</name>
<keyword id="KW-0067">ATP-binding</keyword>
<keyword id="KW-0235">DNA replication</keyword>
<keyword id="KW-0238">DNA-binding</keyword>
<keyword id="KW-0244">Early protein</keyword>
<keyword id="KW-0347">Helicase</keyword>
<keyword id="KW-1048">Host nucleus</keyword>
<keyword id="KW-0378">Hydrolase</keyword>
<keyword id="KW-0413">Isomerase</keyword>
<keyword id="KW-1017">Isopeptide bond</keyword>
<keyword id="KW-0547">Nucleotide-binding</keyword>
<keyword id="KW-0597">Phosphoprotein</keyword>
<keyword id="KW-0832">Ubl conjugation</keyword>
<evidence type="ECO:0000255" key="1">
    <source>
        <dbReference type="HAMAP-Rule" id="MF_04000"/>
    </source>
</evidence>
<evidence type="ECO:0000256" key="2">
    <source>
        <dbReference type="SAM" id="MobiDB-lite"/>
    </source>
</evidence>
<organism>
    <name type="scientific">Human papillomavirus 36</name>
    <dbReference type="NCBI Taxonomy" id="37957"/>
    <lineage>
        <taxon>Viruses</taxon>
        <taxon>Monodnaviria</taxon>
        <taxon>Shotokuvirae</taxon>
        <taxon>Cossaviricota</taxon>
        <taxon>Papovaviricetes</taxon>
        <taxon>Zurhausenvirales</taxon>
        <taxon>Papillomaviridae</taxon>
        <taxon>Firstpapillomavirinae</taxon>
        <taxon>Betapapillomavirus</taxon>
        <taxon>Betapapillomavirus 1</taxon>
    </lineage>
</organism>